<reference key="1">
    <citation type="journal article" date="2002" name="Proc. Natl. Acad. Sci. U.S.A.">
        <title>Complete genome sequence of Clostridium perfringens, an anaerobic flesh-eater.</title>
        <authorList>
            <person name="Shimizu T."/>
            <person name="Ohtani K."/>
            <person name="Hirakawa H."/>
            <person name="Ohshima K."/>
            <person name="Yamashita A."/>
            <person name="Shiba T."/>
            <person name="Ogasawara N."/>
            <person name="Hattori M."/>
            <person name="Kuhara S."/>
            <person name="Hayashi H."/>
        </authorList>
    </citation>
    <scope>NUCLEOTIDE SEQUENCE [LARGE SCALE GENOMIC DNA]</scope>
    <source>
        <strain>13 / Type A</strain>
    </source>
</reference>
<feature type="chain" id="PRO_0000203563" description="Anti-sigma F factor">
    <location>
        <begin position="1"/>
        <end position="140"/>
    </location>
</feature>
<organism>
    <name type="scientific">Clostridium perfringens (strain 13 / Type A)</name>
    <dbReference type="NCBI Taxonomy" id="195102"/>
    <lineage>
        <taxon>Bacteria</taxon>
        <taxon>Bacillati</taxon>
        <taxon>Bacillota</taxon>
        <taxon>Clostridia</taxon>
        <taxon>Eubacteriales</taxon>
        <taxon>Clostridiaceae</taxon>
        <taxon>Clostridium</taxon>
    </lineage>
</organism>
<evidence type="ECO:0000255" key="1">
    <source>
        <dbReference type="HAMAP-Rule" id="MF_00637"/>
    </source>
</evidence>
<protein>
    <recommendedName>
        <fullName evidence="1">Anti-sigma F factor</fullName>
        <ecNumber evidence="1">2.7.11.1</ecNumber>
    </recommendedName>
    <alternativeName>
        <fullName evidence="1">Stage II sporulation protein AB</fullName>
    </alternativeName>
</protein>
<keyword id="KW-0067">ATP-binding</keyword>
<keyword id="KW-0418">Kinase</keyword>
<keyword id="KW-0547">Nucleotide-binding</keyword>
<keyword id="KW-1185">Reference proteome</keyword>
<keyword id="KW-0723">Serine/threonine-protein kinase</keyword>
<keyword id="KW-0749">Sporulation</keyword>
<keyword id="KW-0808">Transferase</keyword>
<comment type="function">
    <text evidence="1">Binds to sigma F and blocks its ability to form an RNA polymerase holoenzyme (E-sigma F). Phosphorylates SpoIIAA on a serine residue. This phosphorylation may enable SpoIIAA to act as an anti-anti-sigma factor that counteracts SpoIIAB and thus releases sigma F from inhibition.</text>
</comment>
<comment type="catalytic activity">
    <reaction evidence="1">
        <text>L-seryl-[protein] + ATP = O-phospho-L-seryl-[protein] + ADP + H(+)</text>
        <dbReference type="Rhea" id="RHEA:17989"/>
        <dbReference type="Rhea" id="RHEA-COMP:9863"/>
        <dbReference type="Rhea" id="RHEA-COMP:11604"/>
        <dbReference type="ChEBI" id="CHEBI:15378"/>
        <dbReference type="ChEBI" id="CHEBI:29999"/>
        <dbReference type="ChEBI" id="CHEBI:30616"/>
        <dbReference type="ChEBI" id="CHEBI:83421"/>
        <dbReference type="ChEBI" id="CHEBI:456216"/>
        <dbReference type="EC" id="2.7.11.1"/>
    </reaction>
</comment>
<comment type="catalytic activity">
    <reaction evidence="1">
        <text>L-threonyl-[protein] + ATP = O-phospho-L-threonyl-[protein] + ADP + H(+)</text>
        <dbReference type="Rhea" id="RHEA:46608"/>
        <dbReference type="Rhea" id="RHEA-COMP:11060"/>
        <dbReference type="Rhea" id="RHEA-COMP:11605"/>
        <dbReference type="ChEBI" id="CHEBI:15378"/>
        <dbReference type="ChEBI" id="CHEBI:30013"/>
        <dbReference type="ChEBI" id="CHEBI:30616"/>
        <dbReference type="ChEBI" id="CHEBI:61977"/>
        <dbReference type="ChEBI" id="CHEBI:456216"/>
        <dbReference type="EC" id="2.7.11.1"/>
    </reaction>
</comment>
<comment type="similarity">
    <text evidence="1">Belongs to the anti-sigma-factor family.</text>
</comment>
<name>SP2AB_CLOPE</name>
<accession>Q8XIR5</accession>
<sequence>MDNKMRLEFLAKSENEGFARVSVSAFIAQLDPTIEELTDIKTAVSEAVTNAIIHGYECDESKVVIIEASICEDEISITVEDNGIGIENLEEAREPLYTSKPELERSGMGFTVMETFMDSLEVYSEKDKGTKIIMKKKMNT</sequence>
<gene>
    <name evidence="1" type="primary">spoIIAB</name>
    <name type="ordered locus">CPE2049</name>
</gene>
<proteinExistence type="inferred from homology"/>
<dbReference type="EC" id="2.7.11.1" evidence="1"/>
<dbReference type="EMBL" id="BA000016">
    <property type="protein sequence ID" value="BAB81755.1"/>
    <property type="molecule type" value="Genomic_DNA"/>
</dbReference>
<dbReference type="RefSeq" id="WP_003451402.1">
    <property type="nucleotide sequence ID" value="NC_003366.1"/>
</dbReference>
<dbReference type="SMR" id="Q8XIR5"/>
<dbReference type="STRING" id="195102.gene:10491319"/>
<dbReference type="GeneID" id="93001413"/>
<dbReference type="KEGG" id="cpe:CPE2049"/>
<dbReference type="HOGENOM" id="CLU_090336_11_0_9"/>
<dbReference type="Proteomes" id="UP000000818">
    <property type="component" value="Chromosome"/>
</dbReference>
<dbReference type="GO" id="GO:0005524">
    <property type="term" value="F:ATP binding"/>
    <property type="evidence" value="ECO:0007669"/>
    <property type="project" value="UniProtKB-KW"/>
</dbReference>
<dbReference type="GO" id="GO:0106310">
    <property type="term" value="F:protein serine kinase activity"/>
    <property type="evidence" value="ECO:0007669"/>
    <property type="project" value="RHEA"/>
</dbReference>
<dbReference type="GO" id="GO:0004674">
    <property type="term" value="F:protein serine/threonine kinase activity"/>
    <property type="evidence" value="ECO:0007669"/>
    <property type="project" value="UniProtKB-KW"/>
</dbReference>
<dbReference type="GO" id="GO:0016989">
    <property type="term" value="F:sigma factor antagonist activity"/>
    <property type="evidence" value="ECO:0007669"/>
    <property type="project" value="InterPro"/>
</dbReference>
<dbReference type="GO" id="GO:0030436">
    <property type="term" value="P:asexual sporulation"/>
    <property type="evidence" value="ECO:0007669"/>
    <property type="project" value="UniProtKB-UniRule"/>
</dbReference>
<dbReference type="GO" id="GO:0042174">
    <property type="term" value="P:negative regulation of sporulation resulting in formation of a cellular spore"/>
    <property type="evidence" value="ECO:0007669"/>
    <property type="project" value="InterPro"/>
</dbReference>
<dbReference type="GO" id="GO:0030435">
    <property type="term" value="P:sporulation resulting in formation of a cellular spore"/>
    <property type="evidence" value="ECO:0007669"/>
    <property type="project" value="UniProtKB-KW"/>
</dbReference>
<dbReference type="CDD" id="cd16942">
    <property type="entry name" value="HATPase_SpoIIAB-like"/>
    <property type="match status" value="1"/>
</dbReference>
<dbReference type="Gene3D" id="3.30.565.10">
    <property type="entry name" value="Histidine kinase-like ATPase, C-terminal domain"/>
    <property type="match status" value="1"/>
</dbReference>
<dbReference type="HAMAP" id="MF_00637">
    <property type="entry name" value="Anti_sigma_F"/>
    <property type="match status" value="1"/>
</dbReference>
<dbReference type="InterPro" id="IPR050267">
    <property type="entry name" value="Anti-sigma-factor_SerPK"/>
</dbReference>
<dbReference type="InterPro" id="IPR010194">
    <property type="entry name" value="Anti-sigma_F"/>
</dbReference>
<dbReference type="InterPro" id="IPR036890">
    <property type="entry name" value="HATPase_C_sf"/>
</dbReference>
<dbReference type="NCBIfam" id="TIGR01925">
    <property type="entry name" value="spIIAB"/>
    <property type="match status" value="1"/>
</dbReference>
<dbReference type="PANTHER" id="PTHR35526:SF3">
    <property type="entry name" value="ANTI-SIGMA-F FACTOR RSBW"/>
    <property type="match status" value="1"/>
</dbReference>
<dbReference type="PANTHER" id="PTHR35526">
    <property type="entry name" value="ANTI-SIGMA-F FACTOR RSBW-RELATED"/>
    <property type="match status" value="1"/>
</dbReference>
<dbReference type="Pfam" id="PF13581">
    <property type="entry name" value="HATPase_c_2"/>
    <property type="match status" value="1"/>
</dbReference>
<dbReference type="SMART" id="SM00387">
    <property type="entry name" value="HATPase_c"/>
    <property type="match status" value="1"/>
</dbReference>
<dbReference type="SUPFAM" id="SSF55874">
    <property type="entry name" value="ATPase domain of HSP90 chaperone/DNA topoisomerase II/histidine kinase"/>
    <property type="match status" value="1"/>
</dbReference>